<reference key="1">
    <citation type="journal article" date="2005" name="Nature">
        <title>The DNA sequence of the human X chromosome.</title>
        <authorList>
            <person name="Ross M.T."/>
            <person name="Grafham D.V."/>
            <person name="Coffey A.J."/>
            <person name="Scherer S."/>
            <person name="McLay K."/>
            <person name="Muzny D."/>
            <person name="Platzer M."/>
            <person name="Howell G.R."/>
            <person name="Burrows C."/>
            <person name="Bird C.P."/>
            <person name="Frankish A."/>
            <person name="Lovell F.L."/>
            <person name="Howe K.L."/>
            <person name="Ashurst J.L."/>
            <person name="Fulton R.S."/>
            <person name="Sudbrak R."/>
            <person name="Wen G."/>
            <person name="Jones M.C."/>
            <person name="Hurles M.E."/>
            <person name="Andrews T.D."/>
            <person name="Scott C.E."/>
            <person name="Searle S."/>
            <person name="Ramser J."/>
            <person name="Whittaker A."/>
            <person name="Deadman R."/>
            <person name="Carter N.P."/>
            <person name="Hunt S.E."/>
            <person name="Chen R."/>
            <person name="Cree A."/>
            <person name="Gunaratne P."/>
            <person name="Havlak P."/>
            <person name="Hodgson A."/>
            <person name="Metzker M.L."/>
            <person name="Richards S."/>
            <person name="Scott G."/>
            <person name="Steffen D."/>
            <person name="Sodergren E."/>
            <person name="Wheeler D.A."/>
            <person name="Worley K.C."/>
            <person name="Ainscough R."/>
            <person name="Ambrose K.D."/>
            <person name="Ansari-Lari M.A."/>
            <person name="Aradhya S."/>
            <person name="Ashwell R.I."/>
            <person name="Babbage A.K."/>
            <person name="Bagguley C.L."/>
            <person name="Ballabio A."/>
            <person name="Banerjee R."/>
            <person name="Barker G.E."/>
            <person name="Barlow K.F."/>
            <person name="Barrett I.P."/>
            <person name="Bates K.N."/>
            <person name="Beare D.M."/>
            <person name="Beasley H."/>
            <person name="Beasley O."/>
            <person name="Beck A."/>
            <person name="Bethel G."/>
            <person name="Blechschmidt K."/>
            <person name="Brady N."/>
            <person name="Bray-Allen S."/>
            <person name="Bridgeman A.M."/>
            <person name="Brown A.J."/>
            <person name="Brown M.J."/>
            <person name="Bonnin D."/>
            <person name="Bruford E.A."/>
            <person name="Buhay C."/>
            <person name="Burch P."/>
            <person name="Burford D."/>
            <person name="Burgess J."/>
            <person name="Burrill W."/>
            <person name="Burton J."/>
            <person name="Bye J.M."/>
            <person name="Carder C."/>
            <person name="Carrel L."/>
            <person name="Chako J."/>
            <person name="Chapman J.C."/>
            <person name="Chavez D."/>
            <person name="Chen E."/>
            <person name="Chen G."/>
            <person name="Chen Y."/>
            <person name="Chen Z."/>
            <person name="Chinault C."/>
            <person name="Ciccodicola A."/>
            <person name="Clark S.Y."/>
            <person name="Clarke G."/>
            <person name="Clee C.M."/>
            <person name="Clegg S."/>
            <person name="Clerc-Blankenburg K."/>
            <person name="Clifford K."/>
            <person name="Cobley V."/>
            <person name="Cole C.G."/>
            <person name="Conquer J.S."/>
            <person name="Corby N."/>
            <person name="Connor R.E."/>
            <person name="David R."/>
            <person name="Davies J."/>
            <person name="Davis C."/>
            <person name="Davis J."/>
            <person name="Delgado O."/>
            <person name="Deshazo D."/>
            <person name="Dhami P."/>
            <person name="Ding Y."/>
            <person name="Dinh H."/>
            <person name="Dodsworth S."/>
            <person name="Draper H."/>
            <person name="Dugan-Rocha S."/>
            <person name="Dunham A."/>
            <person name="Dunn M."/>
            <person name="Durbin K.J."/>
            <person name="Dutta I."/>
            <person name="Eades T."/>
            <person name="Ellwood M."/>
            <person name="Emery-Cohen A."/>
            <person name="Errington H."/>
            <person name="Evans K.L."/>
            <person name="Faulkner L."/>
            <person name="Francis F."/>
            <person name="Frankland J."/>
            <person name="Fraser A.E."/>
            <person name="Galgoczy P."/>
            <person name="Gilbert J."/>
            <person name="Gill R."/>
            <person name="Gloeckner G."/>
            <person name="Gregory S.G."/>
            <person name="Gribble S."/>
            <person name="Griffiths C."/>
            <person name="Grocock R."/>
            <person name="Gu Y."/>
            <person name="Gwilliam R."/>
            <person name="Hamilton C."/>
            <person name="Hart E.A."/>
            <person name="Hawes A."/>
            <person name="Heath P.D."/>
            <person name="Heitmann K."/>
            <person name="Hennig S."/>
            <person name="Hernandez J."/>
            <person name="Hinzmann B."/>
            <person name="Ho S."/>
            <person name="Hoffs M."/>
            <person name="Howden P.J."/>
            <person name="Huckle E.J."/>
            <person name="Hume J."/>
            <person name="Hunt P.J."/>
            <person name="Hunt A.R."/>
            <person name="Isherwood J."/>
            <person name="Jacob L."/>
            <person name="Johnson D."/>
            <person name="Jones S."/>
            <person name="de Jong P.J."/>
            <person name="Joseph S.S."/>
            <person name="Keenan S."/>
            <person name="Kelly S."/>
            <person name="Kershaw J.K."/>
            <person name="Khan Z."/>
            <person name="Kioschis P."/>
            <person name="Klages S."/>
            <person name="Knights A.J."/>
            <person name="Kosiura A."/>
            <person name="Kovar-Smith C."/>
            <person name="Laird G.K."/>
            <person name="Langford C."/>
            <person name="Lawlor S."/>
            <person name="Leversha M."/>
            <person name="Lewis L."/>
            <person name="Liu W."/>
            <person name="Lloyd C."/>
            <person name="Lloyd D.M."/>
            <person name="Loulseged H."/>
            <person name="Loveland J.E."/>
            <person name="Lovell J.D."/>
            <person name="Lozado R."/>
            <person name="Lu J."/>
            <person name="Lyne R."/>
            <person name="Ma J."/>
            <person name="Maheshwari M."/>
            <person name="Matthews L.H."/>
            <person name="McDowall J."/>
            <person name="McLaren S."/>
            <person name="McMurray A."/>
            <person name="Meidl P."/>
            <person name="Meitinger T."/>
            <person name="Milne S."/>
            <person name="Miner G."/>
            <person name="Mistry S.L."/>
            <person name="Morgan M."/>
            <person name="Morris S."/>
            <person name="Mueller I."/>
            <person name="Mullikin J.C."/>
            <person name="Nguyen N."/>
            <person name="Nordsiek G."/>
            <person name="Nyakatura G."/>
            <person name="O'dell C.N."/>
            <person name="Okwuonu G."/>
            <person name="Palmer S."/>
            <person name="Pandian R."/>
            <person name="Parker D."/>
            <person name="Parrish J."/>
            <person name="Pasternak S."/>
            <person name="Patel D."/>
            <person name="Pearce A.V."/>
            <person name="Pearson D.M."/>
            <person name="Pelan S.E."/>
            <person name="Perez L."/>
            <person name="Porter K.M."/>
            <person name="Ramsey Y."/>
            <person name="Reichwald K."/>
            <person name="Rhodes S."/>
            <person name="Ridler K.A."/>
            <person name="Schlessinger D."/>
            <person name="Schueler M.G."/>
            <person name="Sehra H.K."/>
            <person name="Shaw-Smith C."/>
            <person name="Shen H."/>
            <person name="Sheridan E.M."/>
            <person name="Shownkeen R."/>
            <person name="Skuce C.D."/>
            <person name="Smith M.L."/>
            <person name="Sotheran E.C."/>
            <person name="Steingruber H.E."/>
            <person name="Steward C.A."/>
            <person name="Storey R."/>
            <person name="Swann R.M."/>
            <person name="Swarbreck D."/>
            <person name="Tabor P.E."/>
            <person name="Taudien S."/>
            <person name="Taylor T."/>
            <person name="Teague B."/>
            <person name="Thomas K."/>
            <person name="Thorpe A."/>
            <person name="Timms K."/>
            <person name="Tracey A."/>
            <person name="Trevanion S."/>
            <person name="Tromans A.C."/>
            <person name="d'Urso M."/>
            <person name="Verduzco D."/>
            <person name="Villasana D."/>
            <person name="Waldron L."/>
            <person name="Wall M."/>
            <person name="Wang Q."/>
            <person name="Warren J."/>
            <person name="Warry G.L."/>
            <person name="Wei X."/>
            <person name="West A."/>
            <person name="Whitehead S.L."/>
            <person name="Whiteley M.N."/>
            <person name="Wilkinson J.E."/>
            <person name="Willey D.L."/>
            <person name="Williams G."/>
            <person name="Williams L."/>
            <person name="Williamson A."/>
            <person name="Williamson H."/>
            <person name="Wilming L."/>
            <person name="Woodmansey R.L."/>
            <person name="Wray P.W."/>
            <person name="Yen J."/>
            <person name="Zhang J."/>
            <person name="Zhou J."/>
            <person name="Zoghbi H."/>
            <person name="Zorilla S."/>
            <person name="Buck D."/>
            <person name="Reinhardt R."/>
            <person name="Poustka A."/>
            <person name="Rosenthal A."/>
            <person name="Lehrach H."/>
            <person name="Meindl A."/>
            <person name="Minx P.J."/>
            <person name="Hillier L.W."/>
            <person name="Willard H.F."/>
            <person name="Wilson R.K."/>
            <person name="Waterston R.H."/>
            <person name="Rice C.M."/>
            <person name="Vaudin M."/>
            <person name="Coulson A."/>
            <person name="Nelson D.L."/>
            <person name="Weinstock G."/>
            <person name="Sulston J.E."/>
            <person name="Durbin R.M."/>
            <person name="Hubbard T."/>
            <person name="Gibbs R.A."/>
            <person name="Beck S."/>
            <person name="Rogers J."/>
            <person name="Bentley D.R."/>
        </authorList>
    </citation>
    <scope>NUCLEOTIDE SEQUENCE [LARGE SCALE GENOMIC DNA]</scope>
</reference>
<reference key="2">
    <citation type="submission" date="2005-07" db="EMBL/GenBank/DDBJ databases">
        <title>Exhaustive RT-PCR and sequencing of all novel TWINSCAN predictions in human.</title>
        <authorList>
            <person name="Stevens M."/>
            <person name="Wei C."/>
            <person name="Gross S.S."/>
            <person name="McPherson J."/>
            <person name="Brent M.R."/>
        </authorList>
    </citation>
    <scope>NUCLEOTIDE SEQUENCE [LARGE SCALE MRNA] OF 42-290</scope>
</reference>
<accession>A6NM28</accession>
<keyword id="KW-0238">DNA-binding</keyword>
<keyword id="KW-0479">Metal-binding</keyword>
<keyword id="KW-0539">Nucleus</keyword>
<keyword id="KW-1267">Proteomics identification</keyword>
<keyword id="KW-1185">Reference proteome</keyword>
<keyword id="KW-0677">Repeat</keyword>
<keyword id="KW-0804">Transcription</keyword>
<keyword id="KW-0805">Transcription regulation</keyword>
<keyword id="KW-0862">Zinc</keyword>
<keyword id="KW-0863">Zinc-finger</keyword>
<sequence length="416" mass="45791">MAAILLTTRPKVPVSFEDVSVYFTKTEWKLLDLRQKVLYKRVMLENYSHLVSLGFSFSKPHLISQLERGEGPWVADIPRTWATAGLHIGDRTQSKTSTSTQKHSGRQLPGADPQGGKEGQAARSSVLQRGAQGLGQSSAAGPQGPKGAEKRYLCQQCGKAFSRSSNLIKHRIIHSGEKPYACPECGKLFRRSFALLEHQRIHSGEKPYACPECSKTFTRSSNLIKHQVIHSGERPFACGDCGKLFRRSFALLEHARVHSGERPYACPECGKAFSRSSNLIEHQRTHRGEKPYACGQCAKAFKGVSQLIHHQRSHSGERPFACRECGKAFRGRSGLSQHRRVHSGEKPYECSDCGKAFGRRANLFKHQAVHGARRPAKAETARRLAGPGSTGPGSAVAATSPPRPSTAARPSRPSRR</sequence>
<comment type="function">
    <text evidence="1">KRAB domain-containing zinc-finger protein that represses B1/Alu SINE transposable elements and modulates the transcription of nearby genes in a tissue-specific manner. It regulates glucose homeostasis and lipid metabolism by modulating the expression of the endocrine cell-defining transcription factor, MAFB, in pancreatic islets and, the fat metabolism regulator, ACACB, in adipose tissue and muscle.</text>
</comment>
<comment type="subcellular location">
    <subcellularLocation>
        <location evidence="1">Nucleus</location>
    </subcellularLocation>
</comment>
<comment type="similarity">
    <text evidence="5">Belongs to the krueppel C2H2-type zinc-finger protein family.</text>
</comment>
<feature type="chain" id="PRO_0000328807" description="Zinc finger protein 92 homolog">
    <location>
        <begin position="1"/>
        <end position="416"/>
    </location>
</feature>
<feature type="domain" description="KRAB" evidence="3">
    <location>
        <begin position="14"/>
        <end position="85"/>
    </location>
</feature>
<feature type="zinc finger region" description="C2H2-type 1" evidence="2">
    <location>
        <begin position="152"/>
        <end position="174"/>
    </location>
</feature>
<feature type="zinc finger region" description="C2H2-type 2" evidence="2">
    <location>
        <begin position="180"/>
        <end position="202"/>
    </location>
</feature>
<feature type="zinc finger region" description="C2H2-type 3" evidence="2">
    <location>
        <begin position="208"/>
        <end position="230"/>
    </location>
</feature>
<feature type="zinc finger region" description="C2H2-type 4" evidence="2">
    <location>
        <begin position="236"/>
        <end position="258"/>
    </location>
</feature>
<feature type="zinc finger region" description="C2H2-type 5" evidence="2">
    <location>
        <begin position="264"/>
        <end position="286"/>
    </location>
</feature>
<feature type="zinc finger region" description="C2H2-type 6" evidence="2">
    <location>
        <begin position="292"/>
        <end position="314"/>
    </location>
</feature>
<feature type="zinc finger region" description="C2H2-type 7" evidence="2">
    <location>
        <begin position="320"/>
        <end position="342"/>
    </location>
</feature>
<feature type="zinc finger region" description="C2H2-type 8" evidence="2">
    <location>
        <begin position="348"/>
        <end position="370"/>
    </location>
</feature>
<feature type="region of interest" description="Disordered" evidence="4">
    <location>
        <begin position="86"/>
        <end position="125"/>
    </location>
</feature>
<feature type="region of interest" description="Disordered" evidence="4">
    <location>
        <begin position="368"/>
        <end position="416"/>
    </location>
</feature>
<feature type="compositionally biased region" description="Low complexity" evidence="4">
    <location>
        <begin position="394"/>
        <end position="416"/>
    </location>
</feature>
<feature type="sequence conflict" description="In Ref. 2; DR731275." evidence="5" ref="2">
    <original>FSRS</original>
    <variation>LSQR</variation>
    <location>
        <begin position="273"/>
        <end position="276"/>
    </location>
</feature>
<feature type="sequence conflict" description="In Ref. 2; DR731275." evidence="5" ref="2">
    <original>E</original>
    <variation>D</variation>
    <location>
        <position position="281"/>
    </location>
</feature>
<organism>
    <name type="scientific">Homo sapiens</name>
    <name type="common">Human</name>
    <dbReference type="NCBI Taxonomy" id="9606"/>
    <lineage>
        <taxon>Eukaryota</taxon>
        <taxon>Metazoa</taxon>
        <taxon>Chordata</taxon>
        <taxon>Craniata</taxon>
        <taxon>Vertebrata</taxon>
        <taxon>Euteleostomi</taxon>
        <taxon>Mammalia</taxon>
        <taxon>Eutheria</taxon>
        <taxon>Euarchontoglires</taxon>
        <taxon>Primates</taxon>
        <taxon>Haplorrhini</taxon>
        <taxon>Catarrhini</taxon>
        <taxon>Hominidae</taxon>
        <taxon>Homo</taxon>
    </lineage>
</organism>
<evidence type="ECO:0000250" key="1">
    <source>
        <dbReference type="UniProtKB" id="Q62396"/>
    </source>
</evidence>
<evidence type="ECO:0000255" key="2">
    <source>
        <dbReference type="PROSITE-ProRule" id="PRU00042"/>
    </source>
</evidence>
<evidence type="ECO:0000255" key="3">
    <source>
        <dbReference type="PROSITE-ProRule" id="PRU00119"/>
    </source>
</evidence>
<evidence type="ECO:0000256" key="4">
    <source>
        <dbReference type="SAM" id="MobiDB-lite"/>
    </source>
</evidence>
<evidence type="ECO:0000305" key="5"/>
<dbReference type="EMBL" id="U82695">
    <property type="status" value="NOT_ANNOTATED_CDS"/>
    <property type="molecule type" value="Genomic_DNA"/>
</dbReference>
<dbReference type="EMBL" id="DR731275">
    <property type="status" value="NOT_ANNOTATED_CDS"/>
    <property type="molecule type" value="mRNA"/>
</dbReference>
<dbReference type="CCDS" id="CCDS59177.1"/>
<dbReference type="RefSeq" id="NP_001129745.1">
    <property type="nucleotide sequence ID" value="NM_001136273.2"/>
</dbReference>
<dbReference type="RefSeq" id="NP_001373873.1">
    <property type="nucleotide sequence ID" value="NM_001386944.1"/>
</dbReference>
<dbReference type="RefSeq" id="NP_001373874.1">
    <property type="nucleotide sequence ID" value="NM_001386945.1"/>
</dbReference>
<dbReference type="RefSeq" id="XP_005274709.1">
    <property type="nucleotide sequence ID" value="XM_005274652.3"/>
</dbReference>
<dbReference type="RefSeq" id="XP_011529417.1">
    <property type="nucleotide sequence ID" value="XM_011531115.2"/>
</dbReference>
<dbReference type="SMR" id="A6NM28"/>
<dbReference type="BioGRID" id="126583">
    <property type="interactions" value="2"/>
</dbReference>
<dbReference type="STRING" id="9606.ENSP00000462054"/>
<dbReference type="iPTMnet" id="A6NM28"/>
<dbReference type="PhosphoSitePlus" id="A6NM28"/>
<dbReference type="BioMuta" id="ZFP92"/>
<dbReference type="jPOST" id="A6NM28"/>
<dbReference type="MassIVE" id="A6NM28"/>
<dbReference type="PaxDb" id="9606-ENSP00000462054"/>
<dbReference type="PeptideAtlas" id="A6NM28"/>
<dbReference type="ProteomicsDB" id="1507"/>
<dbReference type="Antibodypedia" id="63851">
    <property type="antibodies" value="33 antibodies from 12 providers"/>
</dbReference>
<dbReference type="DNASU" id="139735"/>
<dbReference type="Ensembl" id="ENST00000338647.7">
    <property type="protein sequence ID" value="ENSP00000462054.1"/>
    <property type="gene ID" value="ENSG00000189420.9"/>
</dbReference>
<dbReference type="GeneID" id="139735"/>
<dbReference type="KEGG" id="hsa:139735"/>
<dbReference type="MANE-Select" id="ENST00000338647.7">
    <property type="protein sequence ID" value="ENSP00000462054.1"/>
    <property type="RefSeq nucleotide sequence ID" value="NM_001136273.2"/>
    <property type="RefSeq protein sequence ID" value="NP_001129745.1"/>
</dbReference>
<dbReference type="UCSC" id="uc011myo.3">
    <property type="organism name" value="human"/>
</dbReference>
<dbReference type="AGR" id="HGNC:12865"/>
<dbReference type="CTD" id="139735"/>
<dbReference type="DisGeNET" id="139735"/>
<dbReference type="GeneCards" id="ZFP92"/>
<dbReference type="HGNC" id="HGNC:12865">
    <property type="gene designation" value="ZFP92"/>
</dbReference>
<dbReference type="HPA" id="ENSG00000189420">
    <property type="expression patterns" value="Low tissue specificity"/>
</dbReference>
<dbReference type="MalaCards" id="ZFP92"/>
<dbReference type="MIM" id="301139">
    <property type="type" value="gene"/>
</dbReference>
<dbReference type="neXtProt" id="NX_A6NM28"/>
<dbReference type="OpenTargets" id="ENSG00000189420"/>
<dbReference type="PharmGKB" id="PA37454"/>
<dbReference type="VEuPathDB" id="HostDB:ENSG00000189420"/>
<dbReference type="eggNOG" id="KOG1721">
    <property type="taxonomic scope" value="Eukaryota"/>
</dbReference>
<dbReference type="GeneTree" id="ENSGT00940000162887"/>
<dbReference type="HOGENOM" id="CLU_002678_93_0_1"/>
<dbReference type="InParanoid" id="A6NM28"/>
<dbReference type="OMA" id="PQVCERC"/>
<dbReference type="OrthoDB" id="6077919at2759"/>
<dbReference type="PAN-GO" id="A6NM28">
    <property type="GO annotations" value="4 GO annotations based on evolutionary models"/>
</dbReference>
<dbReference type="PhylomeDB" id="A6NM28"/>
<dbReference type="TreeFam" id="TF337732"/>
<dbReference type="PathwayCommons" id="A6NM28"/>
<dbReference type="SignaLink" id="A6NM28"/>
<dbReference type="BioGRID-ORCS" id="139735">
    <property type="hits" value="12 hits in 791 CRISPR screens"/>
</dbReference>
<dbReference type="GenomeRNAi" id="139735"/>
<dbReference type="Pharos" id="A6NM28">
    <property type="development level" value="Tdark"/>
</dbReference>
<dbReference type="PRO" id="PR:A6NM28"/>
<dbReference type="Proteomes" id="UP000005640">
    <property type="component" value="Chromosome X"/>
</dbReference>
<dbReference type="RNAct" id="A6NM28">
    <property type="molecule type" value="protein"/>
</dbReference>
<dbReference type="Bgee" id="ENSG00000189420">
    <property type="expression patterns" value="Expressed in primordial germ cell in gonad and 148 other cell types or tissues"/>
</dbReference>
<dbReference type="GO" id="GO:0005634">
    <property type="term" value="C:nucleus"/>
    <property type="evidence" value="ECO:0000318"/>
    <property type="project" value="GO_Central"/>
</dbReference>
<dbReference type="GO" id="GO:0000981">
    <property type="term" value="F:DNA-binding transcription factor activity, RNA polymerase II-specific"/>
    <property type="evidence" value="ECO:0000318"/>
    <property type="project" value="GO_Central"/>
</dbReference>
<dbReference type="GO" id="GO:0000978">
    <property type="term" value="F:RNA polymerase II cis-regulatory region sequence-specific DNA binding"/>
    <property type="evidence" value="ECO:0000318"/>
    <property type="project" value="GO_Central"/>
</dbReference>
<dbReference type="GO" id="GO:0008270">
    <property type="term" value="F:zinc ion binding"/>
    <property type="evidence" value="ECO:0007669"/>
    <property type="project" value="UniProtKB-KW"/>
</dbReference>
<dbReference type="GO" id="GO:0006357">
    <property type="term" value="P:regulation of transcription by RNA polymerase II"/>
    <property type="evidence" value="ECO:0000318"/>
    <property type="project" value="GO_Central"/>
</dbReference>
<dbReference type="CDD" id="cd07765">
    <property type="entry name" value="KRAB_A-box"/>
    <property type="match status" value="1"/>
</dbReference>
<dbReference type="FunFam" id="3.30.160.60:FF:002716">
    <property type="entry name" value="Zinc finger protein 212"/>
    <property type="match status" value="1"/>
</dbReference>
<dbReference type="FunFam" id="3.30.160.60:FF:000384">
    <property type="entry name" value="Zinc finger protein 550"/>
    <property type="match status" value="2"/>
</dbReference>
<dbReference type="FunFam" id="3.30.160.60:FF:000953">
    <property type="entry name" value="Zinc finger protein 691"/>
    <property type="match status" value="1"/>
</dbReference>
<dbReference type="FunFam" id="3.30.160.60:FF:001207">
    <property type="entry name" value="zinc finger protein 837 isoform X2"/>
    <property type="match status" value="1"/>
</dbReference>
<dbReference type="FunFam" id="3.30.160.60:FF:001111">
    <property type="entry name" value="Zinc finger protein 92 homolog"/>
    <property type="match status" value="2"/>
</dbReference>
<dbReference type="FunFam" id="3.30.160.60:FF:001671">
    <property type="entry name" value="Zinc finger protein 94"/>
    <property type="match status" value="1"/>
</dbReference>
<dbReference type="Gene3D" id="6.10.140.140">
    <property type="match status" value="1"/>
</dbReference>
<dbReference type="Gene3D" id="3.30.160.60">
    <property type="entry name" value="Classic Zinc Finger"/>
    <property type="match status" value="8"/>
</dbReference>
<dbReference type="InterPro" id="IPR001909">
    <property type="entry name" value="KRAB"/>
</dbReference>
<dbReference type="InterPro" id="IPR036051">
    <property type="entry name" value="KRAB_dom_sf"/>
</dbReference>
<dbReference type="InterPro" id="IPR036236">
    <property type="entry name" value="Znf_C2H2_sf"/>
</dbReference>
<dbReference type="InterPro" id="IPR013087">
    <property type="entry name" value="Znf_C2H2_type"/>
</dbReference>
<dbReference type="PANTHER" id="PTHR24381">
    <property type="entry name" value="ZINC FINGER PROTEIN"/>
    <property type="match status" value="1"/>
</dbReference>
<dbReference type="PANTHER" id="PTHR24381:SF400">
    <property type="entry name" value="ZINC FINGER PROTEIN 487-RELATED"/>
    <property type="match status" value="1"/>
</dbReference>
<dbReference type="Pfam" id="PF01352">
    <property type="entry name" value="KRAB"/>
    <property type="match status" value="1"/>
</dbReference>
<dbReference type="Pfam" id="PF00096">
    <property type="entry name" value="zf-C2H2"/>
    <property type="match status" value="8"/>
</dbReference>
<dbReference type="SMART" id="SM00349">
    <property type="entry name" value="KRAB"/>
    <property type="match status" value="1"/>
</dbReference>
<dbReference type="SMART" id="SM00355">
    <property type="entry name" value="ZnF_C2H2"/>
    <property type="match status" value="8"/>
</dbReference>
<dbReference type="SUPFAM" id="SSF57667">
    <property type="entry name" value="beta-beta-alpha zinc fingers"/>
    <property type="match status" value="4"/>
</dbReference>
<dbReference type="SUPFAM" id="SSF109640">
    <property type="entry name" value="KRAB domain (Kruppel-associated box)"/>
    <property type="match status" value="1"/>
</dbReference>
<dbReference type="PROSITE" id="PS50805">
    <property type="entry name" value="KRAB"/>
    <property type="match status" value="1"/>
</dbReference>
<dbReference type="PROSITE" id="PS00028">
    <property type="entry name" value="ZINC_FINGER_C2H2_1"/>
    <property type="match status" value="8"/>
</dbReference>
<dbReference type="PROSITE" id="PS50157">
    <property type="entry name" value="ZINC_FINGER_C2H2_2"/>
    <property type="match status" value="8"/>
</dbReference>
<protein>
    <recommendedName>
        <fullName>Zinc finger protein 92 homolog</fullName>
        <shortName>Zfp-92</shortName>
    </recommendedName>
</protein>
<gene>
    <name type="primary">ZFP92</name>
</gene>
<name>ZFP92_HUMAN</name>
<proteinExistence type="evidence at protein level"/>